<keyword id="KW-0025">Alternative splicing</keyword>
<keyword id="KW-0963">Cytoplasm</keyword>
<keyword id="KW-0378">Hydrolase</keyword>
<keyword id="KW-0479">Metal-binding</keyword>
<keyword id="KW-0539">Nucleus</keyword>
<keyword id="KW-1267">Proteomics identification</keyword>
<keyword id="KW-1185">Reference proteome</keyword>
<keyword id="KW-0677">Repeat</keyword>
<keyword id="KW-0862">Zinc</keyword>
<gene>
    <name type="primary">CDADC1</name>
</gene>
<dbReference type="EC" id="3.5.4.5" evidence="5"/>
<dbReference type="EMBL" id="AY027525">
    <property type="protein sequence ID" value="AAK16745.1"/>
    <property type="molecule type" value="mRNA"/>
</dbReference>
<dbReference type="EMBL" id="AL138875">
    <property type="status" value="NOT_ANNOTATED_CDS"/>
    <property type="molecule type" value="Genomic_DNA"/>
</dbReference>
<dbReference type="EMBL" id="CH471075">
    <property type="protein sequence ID" value="EAX08817.1"/>
    <property type="molecule type" value="Genomic_DNA"/>
</dbReference>
<dbReference type="EMBL" id="BC009562">
    <property type="protein sequence ID" value="AAH09562.1"/>
    <property type="molecule type" value="mRNA"/>
</dbReference>
<dbReference type="EMBL" id="BC032889">
    <property type="protein sequence ID" value="AAH32889.1"/>
    <property type="molecule type" value="mRNA"/>
</dbReference>
<dbReference type="EMBL" id="BC048092">
    <property type="protein sequence ID" value="AAH48092.1"/>
    <property type="molecule type" value="mRNA"/>
</dbReference>
<dbReference type="EMBL" id="BC125202">
    <property type="protein sequence ID" value="AAI25203.1"/>
    <property type="molecule type" value="mRNA"/>
</dbReference>
<dbReference type="EMBL" id="AL137554">
    <property type="protein sequence ID" value="CAB70808.1"/>
    <property type="molecule type" value="mRNA"/>
</dbReference>
<dbReference type="CCDS" id="CCDS9415.1">
    <molecule id="Q9BWV3-1"/>
</dbReference>
<dbReference type="PIR" id="T46393">
    <property type="entry name" value="T46393"/>
</dbReference>
<dbReference type="RefSeq" id="NP_001180407.1">
    <property type="nucleotide sequence ID" value="NM_001193478.1"/>
</dbReference>
<dbReference type="RefSeq" id="NP_112173.1">
    <molecule id="Q9BWV3-1"/>
    <property type="nucleotide sequence ID" value="NM_030911.4"/>
</dbReference>
<dbReference type="SMR" id="Q9BWV3"/>
<dbReference type="BioGRID" id="123540">
    <property type="interactions" value="13"/>
</dbReference>
<dbReference type="FunCoup" id="Q9BWV3">
    <property type="interactions" value="2336"/>
</dbReference>
<dbReference type="IntAct" id="Q9BWV3">
    <property type="interactions" value="3"/>
</dbReference>
<dbReference type="STRING" id="9606.ENSP00000251108"/>
<dbReference type="GlyGen" id="Q9BWV3">
    <property type="glycosylation" value="1 site, 1 N-linked glycan (1 site)"/>
</dbReference>
<dbReference type="iPTMnet" id="Q9BWV3"/>
<dbReference type="PhosphoSitePlus" id="Q9BWV3"/>
<dbReference type="BioMuta" id="CDADC1"/>
<dbReference type="DMDM" id="74724888"/>
<dbReference type="jPOST" id="Q9BWV3"/>
<dbReference type="MassIVE" id="Q9BWV3"/>
<dbReference type="PaxDb" id="9606-ENSP00000251108"/>
<dbReference type="PeptideAtlas" id="Q9BWV3"/>
<dbReference type="ProteomicsDB" id="79325">
    <molecule id="Q9BWV3-1"/>
</dbReference>
<dbReference type="ProteomicsDB" id="79326">
    <molecule id="Q9BWV3-2"/>
</dbReference>
<dbReference type="ProteomicsDB" id="79327">
    <molecule id="Q9BWV3-3"/>
</dbReference>
<dbReference type="ProteomicsDB" id="79328">
    <molecule id="Q9BWV3-4"/>
</dbReference>
<dbReference type="Antibodypedia" id="23898">
    <property type="antibodies" value="180 antibodies from 20 providers"/>
</dbReference>
<dbReference type="DNASU" id="81602"/>
<dbReference type="Ensembl" id="ENST00000251108.10">
    <molecule id="Q9BWV3-1"/>
    <property type="protein sequence ID" value="ENSP00000251108.6"/>
    <property type="gene ID" value="ENSG00000102543.14"/>
</dbReference>
<dbReference type="GeneID" id="81602"/>
<dbReference type="KEGG" id="hsa:81602"/>
<dbReference type="MANE-Select" id="ENST00000251108.10">
    <property type="protein sequence ID" value="ENSP00000251108.6"/>
    <property type="RefSeq nucleotide sequence ID" value="NM_030911.4"/>
    <property type="RefSeq protein sequence ID" value="NP_112173.1"/>
</dbReference>
<dbReference type="UCSC" id="uc001vcu.4">
    <molecule id="Q9BWV3-1"/>
    <property type="organism name" value="human"/>
</dbReference>
<dbReference type="AGR" id="HGNC:20299"/>
<dbReference type="CTD" id="81602"/>
<dbReference type="DisGeNET" id="81602"/>
<dbReference type="GeneCards" id="CDADC1"/>
<dbReference type="HGNC" id="HGNC:20299">
    <property type="gene designation" value="CDADC1"/>
</dbReference>
<dbReference type="HPA" id="ENSG00000102543">
    <property type="expression patterns" value="Low tissue specificity"/>
</dbReference>
<dbReference type="MIM" id="618997">
    <property type="type" value="gene"/>
</dbReference>
<dbReference type="neXtProt" id="NX_Q9BWV3"/>
<dbReference type="OpenTargets" id="ENSG00000102543"/>
<dbReference type="PharmGKB" id="PA134884656"/>
<dbReference type="VEuPathDB" id="HostDB:ENSG00000102543"/>
<dbReference type="eggNOG" id="KOG3127">
    <property type="taxonomic scope" value="Eukaryota"/>
</dbReference>
<dbReference type="GeneTree" id="ENSGT00940000153676"/>
<dbReference type="HOGENOM" id="CLU_038832_1_0_1"/>
<dbReference type="InParanoid" id="Q9BWV3"/>
<dbReference type="OMA" id="ITHIYTT"/>
<dbReference type="OrthoDB" id="6710946at2759"/>
<dbReference type="PAN-GO" id="Q9BWV3">
    <property type="GO annotations" value="0 GO annotations based on evolutionary models"/>
</dbReference>
<dbReference type="PhylomeDB" id="Q9BWV3"/>
<dbReference type="TreeFam" id="TF333295"/>
<dbReference type="PathwayCommons" id="Q9BWV3"/>
<dbReference type="SignaLink" id="Q9BWV3"/>
<dbReference type="BioGRID-ORCS" id="81602">
    <property type="hits" value="19 hits in 1162 CRISPR screens"/>
</dbReference>
<dbReference type="ChiTaRS" id="CDADC1">
    <property type="organism name" value="human"/>
</dbReference>
<dbReference type="GenomeRNAi" id="81602"/>
<dbReference type="Pharos" id="Q9BWV3">
    <property type="development level" value="Tbio"/>
</dbReference>
<dbReference type="PRO" id="PR:Q9BWV3"/>
<dbReference type="Proteomes" id="UP000005640">
    <property type="component" value="Chromosome 13"/>
</dbReference>
<dbReference type="RNAct" id="Q9BWV3">
    <property type="molecule type" value="protein"/>
</dbReference>
<dbReference type="Bgee" id="ENSG00000102543">
    <property type="expression patterns" value="Expressed in sperm and 177 other cell types or tissues"/>
</dbReference>
<dbReference type="ExpressionAtlas" id="Q9BWV3">
    <property type="expression patterns" value="baseline and differential"/>
</dbReference>
<dbReference type="GO" id="GO:0005737">
    <property type="term" value="C:cytoplasm"/>
    <property type="evidence" value="ECO:0000315"/>
    <property type="project" value="UniProtKB"/>
</dbReference>
<dbReference type="GO" id="GO:0005634">
    <property type="term" value="C:nucleus"/>
    <property type="evidence" value="ECO:0000315"/>
    <property type="project" value="UniProtKB"/>
</dbReference>
<dbReference type="GO" id="GO:0004126">
    <property type="term" value="F:cytidine deaminase activity"/>
    <property type="evidence" value="ECO:0000314"/>
    <property type="project" value="UniProtKB"/>
</dbReference>
<dbReference type="GO" id="GO:0004132">
    <property type="term" value="F:dCMP deaminase activity"/>
    <property type="evidence" value="ECO:0000318"/>
    <property type="project" value="GO_Central"/>
</dbReference>
<dbReference type="GO" id="GO:0061676">
    <property type="term" value="F:importin-alpha family protein binding"/>
    <property type="evidence" value="ECO:0000314"/>
    <property type="project" value="UniProtKB"/>
</dbReference>
<dbReference type="GO" id="GO:0042803">
    <property type="term" value="F:protein homodimerization activity"/>
    <property type="evidence" value="ECO:0000314"/>
    <property type="project" value="UniProtKB"/>
</dbReference>
<dbReference type="GO" id="GO:0008270">
    <property type="term" value="F:zinc ion binding"/>
    <property type="evidence" value="ECO:0000315"/>
    <property type="project" value="UniProtKB"/>
</dbReference>
<dbReference type="GO" id="GO:0009972">
    <property type="term" value="P:cytidine deamination"/>
    <property type="evidence" value="ECO:0000314"/>
    <property type="project" value="UniProtKB"/>
</dbReference>
<dbReference type="GO" id="GO:0070383">
    <property type="term" value="P:DNA cytosine deamination"/>
    <property type="evidence" value="ECO:0000314"/>
    <property type="project" value="UniProtKB"/>
</dbReference>
<dbReference type="CDD" id="cd01286">
    <property type="entry name" value="deoxycytidylate_deaminase"/>
    <property type="match status" value="1"/>
</dbReference>
<dbReference type="FunFam" id="3.40.140.10:FF:000028">
    <property type="entry name" value="Cytidine and dCMP deaminase domain containing 1"/>
    <property type="match status" value="1"/>
</dbReference>
<dbReference type="FunFam" id="3.40.140.10:FF:000030">
    <property type="entry name" value="Cytidine and dCMP deaminase domain-containing protein 1"/>
    <property type="match status" value="1"/>
</dbReference>
<dbReference type="Gene3D" id="3.40.140.10">
    <property type="entry name" value="Cytidine Deaminase, domain 2"/>
    <property type="match status" value="2"/>
</dbReference>
<dbReference type="InterPro" id="IPR016192">
    <property type="entry name" value="APOBEC/CMP_deaminase_Zn-bd"/>
</dbReference>
<dbReference type="InterPro" id="IPR002125">
    <property type="entry name" value="CMP_dCMP_dom"/>
</dbReference>
<dbReference type="InterPro" id="IPR016193">
    <property type="entry name" value="Cytidine_deaminase-like"/>
</dbReference>
<dbReference type="InterPro" id="IPR015517">
    <property type="entry name" value="dCMP_deaminase-rel"/>
</dbReference>
<dbReference type="InterPro" id="IPR035105">
    <property type="entry name" value="Deoxycytidylate_deaminase_dom"/>
</dbReference>
<dbReference type="PANTHER" id="PTHR11086:SF14">
    <property type="entry name" value="CYTIDINE AND DCMP DEAMINASE DOMAIN-CONTAINING PROTEIN 1"/>
    <property type="match status" value="1"/>
</dbReference>
<dbReference type="PANTHER" id="PTHR11086">
    <property type="entry name" value="DEOXYCYTIDYLATE DEAMINASE-RELATED"/>
    <property type="match status" value="1"/>
</dbReference>
<dbReference type="Pfam" id="PF00383">
    <property type="entry name" value="dCMP_cyt_deam_1"/>
    <property type="match status" value="2"/>
</dbReference>
<dbReference type="SUPFAM" id="SSF53927">
    <property type="entry name" value="Cytidine deaminase-like"/>
    <property type="match status" value="2"/>
</dbReference>
<dbReference type="PROSITE" id="PS00903">
    <property type="entry name" value="CYT_DCMP_DEAMINASES_1"/>
    <property type="match status" value="1"/>
</dbReference>
<dbReference type="PROSITE" id="PS51747">
    <property type="entry name" value="CYT_DCMP_DEAMINASES_2"/>
    <property type="match status" value="2"/>
</dbReference>
<name>CDAC1_HUMAN</name>
<accession>Q9BWV3</accession>
<accession>Q49A08</accession>
<accession>Q4G119</accession>
<accession>Q5TAW9</accession>
<accession>Q7Z764</accession>
<accession>Q9NT36</accession>
<reference key="1">
    <citation type="journal article" date="2006" name="Biochem. Genet.">
        <title>NYD-SP15: a novel gene potentially involved in regulating testicular development and spermatogenesis.</title>
        <authorList>
            <person name="Liu Q."/>
            <person name="Liu J."/>
            <person name="Cao Q."/>
            <person name="Sha J."/>
            <person name="Zhou Z."/>
            <person name="Wang H."/>
            <person name="Li J."/>
        </authorList>
    </citation>
    <scope>NUCLEOTIDE SEQUENCE [MRNA] (ISOFORM 1)</scope>
    <scope>FUNCTION</scope>
    <scope>TISSUE SPECIFICITY</scope>
    <source>
        <tissue>Testis</tissue>
    </source>
</reference>
<reference key="2">
    <citation type="journal article" date="2004" name="Nature">
        <title>The DNA sequence and analysis of human chromosome 13.</title>
        <authorList>
            <person name="Dunham A."/>
            <person name="Matthews L.H."/>
            <person name="Burton J."/>
            <person name="Ashurst J.L."/>
            <person name="Howe K.L."/>
            <person name="Ashcroft K.J."/>
            <person name="Beare D.M."/>
            <person name="Burford D.C."/>
            <person name="Hunt S.E."/>
            <person name="Griffiths-Jones S."/>
            <person name="Jones M.C."/>
            <person name="Keenan S.J."/>
            <person name="Oliver K."/>
            <person name="Scott C.E."/>
            <person name="Ainscough R."/>
            <person name="Almeida J.P."/>
            <person name="Ambrose K.D."/>
            <person name="Andrews D.T."/>
            <person name="Ashwell R.I.S."/>
            <person name="Babbage A.K."/>
            <person name="Bagguley C.L."/>
            <person name="Bailey J."/>
            <person name="Bannerjee R."/>
            <person name="Barlow K.F."/>
            <person name="Bates K."/>
            <person name="Beasley H."/>
            <person name="Bird C.P."/>
            <person name="Bray-Allen S."/>
            <person name="Brown A.J."/>
            <person name="Brown J.Y."/>
            <person name="Burrill W."/>
            <person name="Carder C."/>
            <person name="Carter N.P."/>
            <person name="Chapman J.C."/>
            <person name="Clamp M.E."/>
            <person name="Clark S.Y."/>
            <person name="Clarke G."/>
            <person name="Clee C.M."/>
            <person name="Clegg S.C."/>
            <person name="Cobley V."/>
            <person name="Collins J.E."/>
            <person name="Corby N."/>
            <person name="Coville G.J."/>
            <person name="Deloukas P."/>
            <person name="Dhami P."/>
            <person name="Dunham I."/>
            <person name="Dunn M."/>
            <person name="Earthrowl M.E."/>
            <person name="Ellington A.G."/>
            <person name="Faulkner L."/>
            <person name="Frankish A.G."/>
            <person name="Frankland J."/>
            <person name="French L."/>
            <person name="Garner P."/>
            <person name="Garnett J."/>
            <person name="Gilbert J.G.R."/>
            <person name="Gilson C.J."/>
            <person name="Ghori J."/>
            <person name="Grafham D.V."/>
            <person name="Gribble S.M."/>
            <person name="Griffiths C."/>
            <person name="Hall R.E."/>
            <person name="Hammond S."/>
            <person name="Harley J.L."/>
            <person name="Hart E.A."/>
            <person name="Heath P.D."/>
            <person name="Howden P.J."/>
            <person name="Huckle E.J."/>
            <person name="Hunt P.J."/>
            <person name="Hunt A.R."/>
            <person name="Johnson C."/>
            <person name="Johnson D."/>
            <person name="Kay M."/>
            <person name="Kimberley A.M."/>
            <person name="King A."/>
            <person name="Laird G.K."/>
            <person name="Langford C.J."/>
            <person name="Lawlor S."/>
            <person name="Leongamornlert D.A."/>
            <person name="Lloyd D.M."/>
            <person name="Lloyd C."/>
            <person name="Loveland J.E."/>
            <person name="Lovell J."/>
            <person name="Martin S."/>
            <person name="Mashreghi-Mohammadi M."/>
            <person name="McLaren S.J."/>
            <person name="McMurray A."/>
            <person name="Milne S."/>
            <person name="Moore M.J.F."/>
            <person name="Nickerson T."/>
            <person name="Palmer S.A."/>
            <person name="Pearce A.V."/>
            <person name="Peck A.I."/>
            <person name="Pelan S."/>
            <person name="Phillimore B."/>
            <person name="Porter K.M."/>
            <person name="Rice C.M."/>
            <person name="Searle S."/>
            <person name="Sehra H.K."/>
            <person name="Shownkeen R."/>
            <person name="Skuce C.D."/>
            <person name="Smith M."/>
            <person name="Steward C.A."/>
            <person name="Sycamore N."/>
            <person name="Tester J."/>
            <person name="Thomas D.W."/>
            <person name="Tracey A."/>
            <person name="Tromans A."/>
            <person name="Tubby B."/>
            <person name="Wall M."/>
            <person name="Wallis J.M."/>
            <person name="West A.P."/>
            <person name="Whitehead S.L."/>
            <person name="Willey D.L."/>
            <person name="Wilming L."/>
            <person name="Wray P.W."/>
            <person name="Wright M.W."/>
            <person name="Young L."/>
            <person name="Coulson A."/>
            <person name="Durbin R.M."/>
            <person name="Hubbard T."/>
            <person name="Sulston J.E."/>
            <person name="Beck S."/>
            <person name="Bentley D.R."/>
            <person name="Rogers J."/>
            <person name="Ross M.T."/>
        </authorList>
    </citation>
    <scope>NUCLEOTIDE SEQUENCE [LARGE SCALE GENOMIC DNA]</scope>
</reference>
<reference key="3">
    <citation type="submission" date="2005-07" db="EMBL/GenBank/DDBJ databases">
        <authorList>
            <person name="Mural R.J."/>
            <person name="Istrail S."/>
            <person name="Sutton G.G."/>
            <person name="Florea L."/>
            <person name="Halpern A.L."/>
            <person name="Mobarry C.M."/>
            <person name="Lippert R."/>
            <person name="Walenz B."/>
            <person name="Shatkay H."/>
            <person name="Dew I."/>
            <person name="Miller J.R."/>
            <person name="Flanigan M.J."/>
            <person name="Edwards N.J."/>
            <person name="Bolanos R."/>
            <person name="Fasulo D."/>
            <person name="Halldorsson B.V."/>
            <person name="Hannenhalli S."/>
            <person name="Turner R."/>
            <person name="Yooseph S."/>
            <person name="Lu F."/>
            <person name="Nusskern D.R."/>
            <person name="Shue B.C."/>
            <person name="Zheng X.H."/>
            <person name="Zhong F."/>
            <person name="Delcher A.L."/>
            <person name="Huson D.H."/>
            <person name="Kravitz S.A."/>
            <person name="Mouchard L."/>
            <person name="Reinert K."/>
            <person name="Remington K.A."/>
            <person name="Clark A.G."/>
            <person name="Waterman M.S."/>
            <person name="Eichler E.E."/>
            <person name="Adams M.D."/>
            <person name="Hunkapiller M.W."/>
            <person name="Myers E.W."/>
            <person name="Venter J.C."/>
        </authorList>
    </citation>
    <scope>NUCLEOTIDE SEQUENCE [LARGE SCALE GENOMIC DNA]</scope>
</reference>
<reference key="4">
    <citation type="journal article" date="2004" name="Genome Res.">
        <title>The status, quality, and expansion of the NIH full-length cDNA project: the Mammalian Gene Collection (MGC).</title>
        <authorList>
            <consortium name="The MGC Project Team"/>
        </authorList>
    </citation>
    <scope>NUCLEOTIDE SEQUENCE [LARGE SCALE MRNA] (ISOFORMS 1; 2; 3 AND 4)</scope>
    <source>
        <tissue>Bone marrow</tissue>
        <tissue>Brain</tissue>
        <tissue>Pancreas</tissue>
        <tissue>Testis</tissue>
    </source>
</reference>
<reference key="5">
    <citation type="journal article" date="2007" name="BMC Genomics">
        <title>The full-ORF clone resource of the German cDNA consortium.</title>
        <authorList>
            <person name="Bechtel S."/>
            <person name="Rosenfelder H."/>
            <person name="Duda A."/>
            <person name="Schmidt C.P."/>
            <person name="Ernst U."/>
            <person name="Wellenreuther R."/>
            <person name="Mehrle A."/>
            <person name="Schuster C."/>
            <person name="Bahr A."/>
            <person name="Bloecker H."/>
            <person name="Heubner D."/>
            <person name="Hoerlein A."/>
            <person name="Michel G."/>
            <person name="Wedler H."/>
            <person name="Koehrer K."/>
            <person name="Ottenwaelder B."/>
            <person name="Poustka A."/>
            <person name="Wiemann S."/>
            <person name="Schupp I."/>
        </authorList>
    </citation>
    <scope>NUCLEOTIDE SEQUENCE [LARGE SCALE MRNA] OF 400-514</scope>
    <source>
        <tissue>Testis</tissue>
    </source>
</reference>
<reference key="6">
    <citation type="journal article" date="2016" name="Gene">
        <title>Structural and biological function of NYD-SP15 as a new member of cytidine deaminases.</title>
        <authorList>
            <person name="Xu Y."/>
            <person name="Li L."/>
            <person name="Li J."/>
            <person name="Liu Q."/>
        </authorList>
    </citation>
    <scope>FUNCTION</scope>
    <scope>CATALYTIC ACTIVITY</scope>
    <scope>SUBCELLULAR LOCATION</scope>
    <scope>MOTIF</scope>
</reference>
<proteinExistence type="evidence at protein level"/>
<feature type="chain" id="PRO_0000300491" description="Cytidine and dCMP deaminase domain-containing protein 1">
    <location>
        <begin position="1"/>
        <end position="514"/>
    </location>
</feature>
<feature type="domain" description="CMP/dCMP-type deaminase 1" evidence="2">
    <location>
        <begin position="70"/>
        <end position="168"/>
    </location>
</feature>
<feature type="domain" description="CMP/dCMP-type deaminase 2" evidence="2">
    <location>
        <begin position="317"/>
        <end position="482"/>
    </location>
</feature>
<feature type="region of interest" description="Disordered" evidence="3">
    <location>
        <begin position="1"/>
        <end position="27"/>
    </location>
</feature>
<feature type="region of interest" description="Disordered" evidence="3">
    <location>
        <begin position="55"/>
        <end position="83"/>
    </location>
</feature>
<feature type="region of interest" description="Disordered" evidence="3">
    <location>
        <begin position="480"/>
        <end position="514"/>
    </location>
</feature>
<feature type="short sequence motif" description="Nuclear export signal" evidence="8">
    <location>
        <begin position="271"/>
        <end position="283"/>
    </location>
</feature>
<feature type="short sequence motif" description="Bipartite nuclear localization signal" evidence="8">
    <location>
        <begin position="488"/>
        <end position="510"/>
    </location>
</feature>
<feature type="compositionally biased region" description="Polar residues" evidence="3">
    <location>
        <begin position="1"/>
        <end position="11"/>
    </location>
</feature>
<feature type="compositionally biased region" description="Polar residues" evidence="3">
    <location>
        <begin position="18"/>
        <end position="27"/>
    </location>
</feature>
<feature type="compositionally biased region" description="Basic and acidic residues" evidence="3">
    <location>
        <begin position="59"/>
        <end position="83"/>
    </location>
</feature>
<feature type="compositionally biased region" description="Basic and acidic residues" evidence="3">
    <location>
        <begin position="485"/>
        <end position="514"/>
    </location>
</feature>
<feature type="active site" description="Proton donor" evidence="2">
    <location>
        <position position="400"/>
    </location>
</feature>
<feature type="binding site" evidence="2">
    <location>
        <position position="109"/>
    </location>
    <ligand>
        <name>Zn(2+)</name>
        <dbReference type="ChEBI" id="CHEBI:29105"/>
        <label>1</label>
    </ligand>
</feature>
<feature type="binding site" evidence="2">
    <location>
        <position position="134"/>
    </location>
    <ligand>
        <name>Zn(2+)</name>
        <dbReference type="ChEBI" id="CHEBI:29105"/>
        <label>1</label>
    </ligand>
</feature>
<feature type="binding site" evidence="2">
    <location>
        <position position="137"/>
    </location>
    <ligand>
        <name>Zn(2+)</name>
        <dbReference type="ChEBI" id="CHEBI:29105"/>
        <label>1</label>
    </ligand>
</feature>
<feature type="binding site" evidence="2">
    <location>
        <position position="398"/>
    </location>
    <ligand>
        <name>Zn(2+)</name>
        <dbReference type="ChEBI" id="CHEBI:29105"/>
        <label>2</label>
        <note>catalytic</note>
    </ligand>
</feature>
<feature type="binding site" evidence="2">
    <location>
        <position position="426"/>
    </location>
    <ligand>
        <name>Zn(2+)</name>
        <dbReference type="ChEBI" id="CHEBI:29105"/>
        <label>2</label>
        <note>catalytic</note>
    </ligand>
</feature>
<feature type="binding site" evidence="2">
    <location>
        <position position="429"/>
    </location>
    <ligand>
        <name>Zn(2+)</name>
        <dbReference type="ChEBI" id="CHEBI:29105"/>
        <label>2</label>
        <note>catalytic</note>
    </ligand>
</feature>
<feature type="splice variant" id="VSP_027811" description="In isoform 4." evidence="6">
    <location>
        <begin position="1"/>
        <end position="380"/>
    </location>
</feature>
<feature type="splice variant" id="VSP_027812" description="In isoform 2." evidence="6">
    <original>VKRTGLVVVKNMKIV</original>
    <variation>KTMFCLFENDCKCWS</variation>
    <location>
        <begin position="85"/>
        <end position="99"/>
    </location>
</feature>
<feature type="splice variant" id="VSP_027813" description="In isoform 2." evidence="6">
    <location>
        <begin position="100"/>
        <end position="514"/>
    </location>
</feature>
<feature type="splice variant" id="VSP_027814" description="In isoform 3." evidence="6">
    <original>AGVNRISYWPA</original>
    <variation>GLLGAAKMPR</variation>
    <location>
        <begin position="144"/>
        <end position="154"/>
    </location>
</feature>
<feature type="splice variant" id="VSP_027815" description="In isoform 3." evidence="6">
    <location>
        <begin position="155"/>
        <end position="514"/>
    </location>
</feature>
<protein>
    <recommendedName>
        <fullName>Cytidine and dCMP deaminase domain-containing protein 1</fullName>
        <ecNumber evidence="5">3.5.4.5</ecNumber>
    </recommendedName>
    <alternativeName>
        <fullName evidence="7">Cytidine deaminase</fullName>
    </alternativeName>
    <alternativeName>
        <fullName>Testis development protein NYD-SP15</fullName>
    </alternativeName>
</protein>
<organism>
    <name type="scientific">Homo sapiens</name>
    <name type="common">Human</name>
    <dbReference type="NCBI Taxonomy" id="9606"/>
    <lineage>
        <taxon>Eukaryota</taxon>
        <taxon>Metazoa</taxon>
        <taxon>Chordata</taxon>
        <taxon>Craniata</taxon>
        <taxon>Vertebrata</taxon>
        <taxon>Euteleostomi</taxon>
        <taxon>Mammalia</taxon>
        <taxon>Eutheria</taxon>
        <taxon>Euarchontoglires</taxon>
        <taxon>Primates</taxon>
        <taxon>Haplorrhini</taxon>
        <taxon>Catarrhini</taxon>
        <taxon>Hominidae</taxon>
        <taxon>Homo</taxon>
    </lineage>
</organism>
<comment type="function">
    <text evidence="4 5">Catalyzes the deamination of cytidine and deoxycytidine into uridine and deoxyuridine, respectively (PubMed:26945630). May play an important role in testicular development and spermatogenesis (PubMed:16955368).</text>
</comment>
<comment type="catalytic activity">
    <reaction evidence="5">
        <text>2'-deoxycytidine + H2O + H(+) = 2'-deoxyuridine + NH4(+)</text>
        <dbReference type="Rhea" id="RHEA:13433"/>
        <dbReference type="ChEBI" id="CHEBI:15377"/>
        <dbReference type="ChEBI" id="CHEBI:15378"/>
        <dbReference type="ChEBI" id="CHEBI:15698"/>
        <dbReference type="ChEBI" id="CHEBI:16450"/>
        <dbReference type="ChEBI" id="CHEBI:28938"/>
        <dbReference type="EC" id="3.5.4.5"/>
    </reaction>
</comment>
<comment type="catalytic activity">
    <reaction evidence="5">
        <text>cytidine + H2O + H(+) = uridine + NH4(+)</text>
        <dbReference type="Rhea" id="RHEA:16069"/>
        <dbReference type="ChEBI" id="CHEBI:15377"/>
        <dbReference type="ChEBI" id="CHEBI:15378"/>
        <dbReference type="ChEBI" id="CHEBI:16704"/>
        <dbReference type="ChEBI" id="CHEBI:17562"/>
        <dbReference type="ChEBI" id="CHEBI:28938"/>
        <dbReference type="EC" id="3.5.4.5"/>
    </reaction>
</comment>
<comment type="cofactor">
    <cofactor evidence="1">
        <name>Zn(2+)</name>
        <dbReference type="ChEBI" id="CHEBI:29105"/>
    </cofactor>
</comment>
<comment type="subcellular location">
    <subcellularLocation>
        <location evidence="8">Cytoplasm</location>
    </subcellularLocation>
    <subcellularLocation>
        <location evidence="8">Nucleus</location>
    </subcellularLocation>
</comment>
<comment type="alternative products">
    <event type="alternative splicing"/>
    <isoform>
        <id>Q9BWV3-1</id>
        <name>1</name>
        <sequence type="displayed"/>
    </isoform>
    <isoform>
        <id>Q9BWV3-2</id>
        <name>2</name>
        <sequence type="described" ref="VSP_027812 VSP_027813"/>
    </isoform>
    <isoform>
        <id>Q9BWV3-3</id>
        <name>3</name>
        <sequence type="described" ref="VSP_027814 VSP_027815"/>
    </isoform>
    <isoform>
        <id>Q9BWV3-4</id>
        <name>4</name>
        <sequence type="described" ref="VSP_027811"/>
    </isoform>
</comment>
<comment type="tissue specificity">
    <text evidence="4">Widely expressed. Expressed at high levels in the testis.</text>
</comment>
<comment type="similarity">
    <text evidence="7">Belongs to the cytidine and deoxycytidylate deaminase family.</text>
</comment>
<evidence type="ECO:0000250" key="1">
    <source>
        <dbReference type="UniProtKB" id="Q9GZX7"/>
    </source>
</evidence>
<evidence type="ECO:0000255" key="2">
    <source>
        <dbReference type="PROSITE-ProRule" id="PRU01083"/>
    </source>
</evidence>
<evidence type="ECO:0000256" key="3">
    <source>
        <dbReference type="SAM" id="MobiDB-lite"/>
    </source>
</evidence>
<evidence type="ECO:0000269" key="4">
    <source>
    </source>
</evidence>
<evidence type="ECO:0000269" key="5">
    <source>
    </source>
</evidence>
<evidence type="ECO:0000303" key="6">
    <source>
    </source>
</evidence>
<evidence type="ECO:0000305" key="7"/>
<evidence type="ECO:0000305" key="8">
    <source>
    </source>
</evidence>
<sequence>MKEAGQMQNLESARAGRSVSTQTGSMTGQIPRLSKVNLFTLLSLWMELFPAEAQRQKSQKNEEGKHGPLGDNEERTRVSTDKRQVKRTGLVVVKNMKIVGLHCSSEDLHAGQIALIKHGSRLKNCDLYFSRKPCSACLKMIVNAGVNRISYWPADPEISLLTEASSSEDAKLDAKAVERLKSNSRAHVCVLLQPLVCYMVQFVEETSYKCDFIQKITKTLPDANTDFYYECKQERIKEYEMLFLVSNEEMHKQILMTIGLENLCENPYFSNLRQNMKDLILLLATVASSVPNFKHFGFYRSNPEQINEIHNQSLPQEIARHCMVQARLLAYRTEDHKTGVGAVIWAEGKSRSCDGTGAMYFVGCGYNAFPVGSEYADFPHMDDKQKDREIRKFRYIIHAEQNALTFRCQEIKPEERSMIFVTKCPCDECVPLIKGAGIKQIYAGDVDVGKKKADISYMRFGELEGVSKFTWQLNPSGAYGLEQNEPERRENGVLRPVPQKEEQHQDKKLRLGIH</sequence>